<gene>
    <name evidence="1" type="primary">fadB</name>
    <name type="ordered locus">UTI89_C4431</name>
</gene>
<dbReference type="EC" id="4.2.1.17" evidence="1"/>
<dbReference type="EC" id="5.1.2.3" evidence="1"/>
<dbReference type="EC" id="5.3.3.8" evidence="1"/>
<dbReference type="EC" id="1.1.1.35" evidence="1"/>
<dbReference type="EMBL" id="CP000243">
    <property type="protein sequence ID" value="ABE09848.1"/>
    <property type="status" value="ALT_INIT"/>
    <property type="molecule type" value="Genomic_DNA"/>
</dbReference>
<dbReference type="RefSeq" id="WP_000966027.1">
    <property type="nucleotide sequence ID" value="NZ_CP064825.1"/>
</dbReference>
<dbReference type="SMR" id="Q1R466"/>
<dbReference type="KEGG" id="eci:UTI89_C4431"/>
<dbReference type="HOGENOM" id="CLU_009834_16_3_6"/>
<dbReference type="UniPathway" id="UPA00659"/>
<dbReference type="Proteomes" id="UP000001952">
    <property type="component" value="Chromosome"/>
</dbReference>
<dbReference type="GO" id="GO:0036125">
    <property type="term" value="C:fatty acid beta-oxidation multienzyme complex"/>
    <property type="evidence" value="ECO:0007669"/>
    <property type="project" value="InterPro"/>
</dbReference>
<dbReference type="GO" id="GO:0008692">
    <property type="term" value="F:3-hydroxybutyryl-CoA epimerase activity"/>
    <property type="evidence" value="ECO:0007669"/>
    <property type="project" value="UniProtKB-UniRule"/>
</dbReference>
<dbReference type="GO" id="GO:0004165">
    <property type="term" value="F:delta(3)-delta(2)-enoyl-CoA isomerase activity"/>
    <property type="evidence" value="ECO:0007669"/>
    <property type="project" value="UniProtKB-UniRule"/>
</dbReference>
<dbReference type="GO" id="GO:0004300">
    <property type="term" value="F:enoyl-CoA hydratase activity"/>
    <property type="evidence" value="ECO:0007669"/>
    <property type="project" value="UniProtKB-UniRule"/>
</dbReference>
<dbReference type="GO" id="GO:0016509">
    <property type="term" value="F:long-chain-3-hydroxyacyl-CoA dehydrogenase activity"/>
    <property type="evidence" value="ECO:0007669"/>
    <property type="project" value="TreeGrafter"/>
</dbReference>
<dbReference type="GO" id="GO:0070403">
    <property type="term" value="F:NAD+ binding"/>
    <property type="evidence" value="ECO:0007669"/>
    <property type="project" value="InterPro"/>
</dbReference>
<dbReference type="GO" id="GO:0006635">
    <property type="term" value="P:fatty acid beta-oxidation"/>
    <property type="evidence" value="ECO:0007669"/>
    <property type="project" value="UniProtKB-UniRule"/>
</dbReference>
<dbReference type="CDD" id="cd06558">
    <property type="entry name" value="crotonase-like"/>
    <property type="match status" value="1"/>
</dbReference>
<dbReference type="FunFam" id="1.10.1040.50:FF:000001">
    <property type="entry name" value="Fatty acid oxidation complex subunit alpha"/>
    <property type="match status" value="1"/>
</dbReference>
<dbReference type="FunFam" id="3.90.226.10:FF:000018">
    <property type="entry name" value="Fatty acid oxidation complex subunit alpha"/>
    <property type="match status" value="1"/>
</dbReference>
<dbReference type="FunFam" id="3.40.50.720:FF:000009">
    <property type="entry name" value="Fatty oxidation complex, alpha subunit"/>
    <property type="match status" value="1"/>
</dbReference>
<dbReference type="Gene3D" id="1.10.1040.50">
    <property type="match status" value="1"/>
</dbReference>
<dbReference type="Gene3D" id="3.90.226.10">
    <property type="entry name" value="2-enoyl-CoA Hydratase, Chain A, domain 1"/>
    <property type="match status" value="1"/>
</dbReference>
<dbReference type="Gene3D" id="3.40.50.720">
    <property type="entry name" value="NAD(P)-binding Rossmann-like Domain"/>
    <property type="match status" value="1"/>
</dbReference>
<dbReference type="HAMAP" id="MF_01621">
    <property type="entry name" value="FadB"/>
    <property type="match status" value="1"/>
</dbReference>
<dbReference type="InterPro" id="IPR006180">
    <property type="entry name" value="3-OHacyl-CoA_DH_CS"/>
</dbReference>
<dbReference type="InterPro" id="IPR006176">
    <property type="entry name" value="3-OHacyl-CoA_DH_NAD-bd"/>
</dbReference>
<dbReference type="InterPro" id="IPR006108">
    <property type="entry name" value="3HC_DH_C"/>
</dbReference>
<dbReference type="InterPro" id="IPR008927">
    <property type="entry name" value="6-PGluconate_DH-like_C_sf"/>
</dbReference>
<dbReference type="InterPro" id="IPR029045">
    <property type="entry name" value="ClpP/crotonase-like_dom_sf"/>
</dbReference>
<dbReference type="InterPro" id="IPR018376">
    <property type="entry name" value="Enoyl-CoA_hyd/isom_CS"/>
</dbReference>
<dbReference type="InterPro" id="IPR001753">
    <property type="entry name" value="Enoyl-CoA_hydra/iso"/>
</dbReference>
<dbReference type="InterPro" id="IPR050136">
    <property type="entry name" value="FA_oxidation_alpha_subunit"/>
</dbReference>
<dbReference type="InterPro" id="IPR012799">
    <property type="entry name" value="FadB"/>
</dbReference>
<dbReference type="InterPro" id="IPR036291">
    <property type="entry name" value="NAD(P)-bd_dom_sf"/>
</dbReference>
<dbReference type="NCBIfam" id="TIGR02437">
    <property type="entry name" value="FadB"/>
    <property type="match status" value="1"/>
</dbReference>
<dbReference type="NCBIfam" id="NF008727">
    <property type="entry name" value="PRK11730.1"/>
    <property type="match status" value="1"/>
</dbReference>
<dbReference type="PANTHER" id="PTHR43612">
    <property type="entry name" value="TRIFUNCTIONAL ENZYME SUBUNIT ALPHA"/>
    <property type="match status" value="1"/>
</dbReference>
<dbReference type="PANTHER" id="PTHR43612:SF3">
    <property type="entry name" value="TRIFUNCTIONAL ENZYME SUBUNIT ALPHA, MITOCHONDRIAL"/>
    <property type="match status" value="1"/>
</dbReference>
<dbReference type="Pfam" id="PF00725">
    <property type="entry name" value="3HCDH"/>
    <property type="match status" value="2"/>
</dbReference>
<dbReference type="Pfam" id="PF02737">
    <property type="entry name" value="3HCDH_N"/>
    <property type="match status" value="1"/>
</dbReference>
<dbReference type="Pfam" id="PF00378">
    <property type="entry name" value="ECH_1"/>
    <property type="match status" value="1"/>
</dbReference>
<dbReference type="SUPFAM" id="SSF48179">
    <property type="entry name" value="6-phosphogluconate dehydrogenase C-terminal domain-like"/>
    <property type="match status" value="2"/>
</dbReference>
<dbReference type="SUPFAM" id="SSF52096">
    <property type="entry name" value="ClpP/crotonase"/>
    <property type="match status" value="1"/>
</dbReference>
<dbReference type="SUPFAM" id="SSF51735">
    <property type="entry name" value="NAD(P)-binding Rossmann-fold domains"/>
    <property type="match status" value="1"/>
</dbReference>
<dbReference type="PROSITE" id="PS00067">
    <property type="entry name" value="3HCDH"/>
    <property type="match status" value="1"/>
</dbReference>
<dbReference type="PROSITE" id="PS00166">
    <property type="entry name" value="ENOYL_COA_HYDRATASE"/>
    <property type="match status" value="1"/>
</dbReference>
<feature type="chain" id="PRO_0000255841" description="Fatty acid oxidation complex subunit alpha">
    <location>
        <begin position="1"/>
        <end position="729"/>
    </location>
</feature>
<feature type="region of interest" description="Enoyl-CoA hydratase/isomerase" evidence="1">
    <location>
        <begin position="1"/>
        <end position="189"/>
    </location>
</feature>
<feature type="region of interest" description="3-hydroxyacyl-CoA dehydrogenase" evidence="1">
    <location>
        <begin position="311"/>
        <end position="729"/>
    </location>
</feature>
<feature type="region of interest" description="Disordered" evidence="2">
    <location>
        <begin position="708"/>
        <end position="729"/>
    </location>
</feature>
<feature type="active site" description="For 3-hydroxyacyl-CoA dehydrogenase activity" evidence="1">
    <location>
        <position position="450"/>
    </location>
</feature>
<feature type="binding site" evidence="1">
    <location>
        <position position="296"/>
    </location>
    <ligand>
        <name>substrate</name>
    </ligand>
</feature>
<feature type="binding site" evidence="1">
    <location>
        <position position="324"/>
    </location>
    <ligand>
        <name>NAD(+)</name>
        <dbReference type="ChEBI" id="CHEBI:57540"/>
    </ligand>
</feature>
<feature type="binding site" evidence="1">
    <location>
        <position position="343"/>
    </location>
    <ligand>
        <name>NAD(+)</name>
        <dbReference type="ChEBI" id="CHEBI:57540"/>
    </ligand>
</feature>
<feature type="binding site" evidence="1">
    <location>
        <begin position="400"/>
        <end position="402"/>
    </location>
    <ligand>
        <name>NAD(+)</name>
        <dbReference type="ChEBI" id="CHEBI:57540"/>
    </ligand>
</feature>
<feature type="binding site" evidence="1">
    <location>
        <position position="407"/>
    </location>
    <ligand>
        <name>NAD(+)</name>
        <dbReference type="ChEBI" id="CHEBI:57540"/>
    </ligand>
</feature>
<feature type="binding site" evidence="1">
    <location>
        <position position="429"/>
    </location>
    <ligand>
        <name>NAD(+)</name>
        <dbReference type="ChEBI" id="CHEBI:57540"/>
    </ligand>
</feature>
<feature type="binding site" evidence="1">
    <location>
        <position position="453"/>
    </location>
    <ligand>
        <name>NAD(+)</name>
        <dbReference type="ChEBI" id="CHEBI:57540"/>
    </ligand>
</feature>
<feature type="binding site" evidence="1">
    <location>
        <position position="500"/>
    </location>
    <ligand>
        <name>substrate</name>
    </ligand>
</feature>
<feature type="binding site" evidence="1">
    <location>
        <position position="660"/>
    </location>
    <ligand>
        <name>substrate</name>
    </ligand>
</feature>
<feature type="site" description="Important for catalytic activity" evidence="1">
    <location>
        <position position="119"/>
    </location>
</feature>
<feature type="site" description="Important for catalytic activity" evidence="1">
    <location>
        <position position="139"/>
    </location>
</feature>
<sequence>MLYKGDTLYLDWLEDGIAELVFDTPGSVNKLDTATVASLGEAIGVLEQQSDLKGLLLRSNKAAFIVGADITEFLSLFLVPEEQLSQWLHFANSVFNRLEDLPVPTIAAVNGYALGGGCECVLATDYRLATPDLRIGLPETKLGIMPGFGGSVRMPRMLGADSALEIIAAGKDVGADQALKIGLVDGVVKAEKLVEGAIAILRQAINGDLDWKAKRQPKLEPLKLSKIEAAMSFTIAKGMVAQTAGKHYPAPITAVKTIEAAARFGREEALNLENKSFVPLAHTNEARALVGIFLNDQYVKGKAKKLTKDVETPKQAAVLGAGIMGGGIAYQSAWKGVPVVMKDINDKSLTLGMTEAAKLLNKQLERGKIDGLKLAGVISTIHPTLDYAGFDRVDVVVEAVVENPKVKKAVLAETEQKVRPDTVLASNTSTIPISELANALERPENFCGMHFFNPVHRMPLVEIIRGEKSSDETIAKVVAWASKMGKTPIVVNDCPGFFVNRVLFPYFAGFSQLLRDGAGFRKIDKVMEKQFGWPMGPAYLLDVVGIDTAHHAQAVMAAGFPQRMQKDYRDAIDALFDANRFGQKNGLGFWRYKEDSKGKPKKEEDVVVDDLLAKVSQPKRDFSEEEIIARMMIPMVNEVVRCLEEGIIATPAEADMALVYGLGFPPFHGGAFRWLDTLGSAKYLDMAQQYQHLGPLYEVPEGLRNKARHNEPYYPPVEPARPVGDLKTA</sequence>
<protein>
    <recommendedName>
        <fullName evidence="1">Fatty acid oxidation complex subunit alpha</fullName>
    </recommendedName>
    <domain>
        <recommendedName>
            <fullName evidence="1">Enoyl-CoA hydratase/Delta(3)-cis-Delta(2)-trans-enoyl-CoA isomerase/3-hydroxybutyryl-CoA epimerase</fullName>
            <ecNumber evidence="1">4.2.1.17</ecNumber>
            <ecNumber evidence="1">5.1.2.3</ecNumber>
            <ecNumber evidence="1">5.3.3.8</ecNumber>
        </recommendedName>
    </domain>
    <domain>
        <recommendedName>
            <fullName evidence="1">3-hydroxyacyl-CoA dehydrogenase</fullName>
            <ecNumber evidence="1">1.1.1.35</ecNumber>
        </recommendedName>
    </domain>
</protein>
<name>FADB_ECOUT</name>
<evidence type="ECO:0000255" key="1">
    <source>
        <dbReference type="HAMAP-Rule" id="MF_01621"/>
    </source>
</evidence>
<evidence type="ECO:0000256" key="2">
    <source>
        <dbReference type="SAM" id="MobiDB-lite"/>
    </source>
</evidence>
<evidence type="ECO:0000305" key="3"/>
<accession>Q1R466</accession>
<keyword id="KW-0276">Fatty acid metabolism</keyword>
<keyword id="KW-0413">Isomerase</keyword>
<keyword id="KW-0442">Lipid degradation</keyword>
<keyword id="KW-0443">Lipid metabolism</keyword>
<keyword id="KW-0456">Lyase</keyword>
<keyword id="KW-0511">Multifunctional enzyme</keyword>
<keyword id="KW-0520">NAD</keyword>
<keyword id="KW-0560">Oxidoreductase</keyword>
<comment type="function">
    <text evidence="1">Involved in the aerobic and anaerobic degradation of long-chain fatty acids via beta-oxidation cycle. Catalyzes the formation of 3-oxoacyl-CoA from enoyl-CoA via L-3-hydroxyacyl-CoA. It can also use D-3-hydroxyacyl-CoA and cis-3-enoyl-CoA as substrate.</text>
</comment>
<comment type="catalytic activity">
    <reaction evidence="1">
        <text>a (3S)-3-hydroxyacyl-CoA + NAD(+) = a 3-oxoacyl-CoA + NADH + H(+)</text>
        <dbReference type="Rhea" id="RHEA:22432"/>
        <dbReference type="ChEBI" id="CHEBI:15378"/>
        <dbReference type="ChEBI" id="CHEBI:57318"/>
        <dbReference type="ChEBI" id="CHEBI:57540"/>
        <dbReference type="ChEBI" id="CHEBI:57945"/>
        <dbReference type="ChEBI" id="CHEBI:90726"/>
        <dbReference type="EC" id="1.1.1.35"/>
    </reaction>
</comment>
<comment type="catalytic activity">
    <reaction evidence="1">
        <text>a (3S)-3-hydroxyacyl-CoA = a (2E)-enoyl-CoA + H2O</text>
        <dbReference type="Rhea" id="RHEA:16105"/>
        <dbReference type="ChEBI" id="CHEBI:15377"/>
        <dbReference type="ChEBI" id="CHEBI:57318"/>
        <dbReference type="ChEBI" id="CHEBI:58856"/>
        <dbReference type="EC" id="4.2.1.17"/>
    </reaction>
</comment>
<comment type="catalytic activity">
    <reaction evidence="1">
        <text>a 4-saturated-(3S)-3-hydroxyacyl-CoA = a (3E)-enoyl-CoA + H2O</text>
        <dbReference type="Rhea" id="RHEA:20724"/>
        <dbReference type="ChEBI" id="CHEBI:15377"/>
        <dbReference type="ChEBI" id="CHEBI:58521"/>
        <dbReference type="ChEBI" id="CHEBI:137480"/>
        <dbReference type="EC" id="4.2.1.17"/>
    </reaction>
</comment>
<comment type="catalytic activity">
    <reaction evidence="1">
        <text>(3S)-3-hydroxybutanoyl-CoA = (3R)-3-hydroxybutanoyl-CoA</text>
        <dbReference type="Rhea" id="RHEA:21760"/>
        <dbReference type="ChEBI" id="CHEBI:57315"/>
        <dbReference type="ChEBI" id="CHEBI:57316"/>
        <dbReference type="EC" id="5.1.2.3"/>
    </reaction>
</comment>
<comment type="catalytic activity">
    <reaction evidence="1">
        <text>a (3Z)-enoyl-CoA = a 4-saturated (2E)-enoyl-CoA</text>
        <dbReference type="Rhea" id="RHEA:45900"/>
        <dbReference type="ChEBI" id="CHEBI:85097"/>
        <dbReference type="ChEBI" id="CHEBI:85489"/>
        <dbReference type="EC" id="5.3.3.8"/>
    </reaction>
</comment>
<comment type="catalytic activity">
    <reaction evidence="1">
        <text>a (3E)-enoyl-CoA = a 4-saturated (2E)-enoyl-CoA</text>
        <dbReference type="Rhea" id="RHEA:45228"/>
        <dbReference type="ChEBI" id="CHEBI:58521"/>
        <dbReference type="ChEBI" id="CHEBI:85097"/>
        <dbReference type="EC" id="5.3.3.8"/>
    </reaction>
</comment>
<comment type="pathway">
    <text evidence="1">Lipid metabolism; fatty acid beta-oxidation.</text>
</comment>
<comment type="subunit">
    <text evidence="1">Heterotetramer of two alpha chains (FadB) and two beta chains (FadA).</text>
</comment>
<comment type="similarity">
    <text evidence="1">In the N-terminal section; belongs to the enoyl-CoA hydratase/isomerase family.</text>
</comment>
<comment type="similarity">
    <text evidence="1">In the C-terminal section; belongs to the 3-hydroxyacyl-CoA dehydrogenase family.</text>
</comment>
<comment type="sequence caution" evidence="3">
    <conflict type="erroneous initiation">
        <sequence resource="EMBL-CDS" id="ABE09848"/>
    </conflict>
</comment>
<reference key="1">
    <citation type="journal article" date="2006" name="Proc. Natl. Acad. Sci. U.S.A.">
        <title>Identification of genes subject to positive selection in uropathogenic strains of Escherichia coli: a comparative genomics approach.</title>
        <authorList>
            <person name="Chen S.L."/>
            <person name="Hung C.-S."/>
            <person name="Xu J."/>
            <person name="Reigstad C.S."/>
            <person name="Magrini V."/>
            <person name="Sabo A."/>
            <person name="Blasiar D."/>
            <person name="Bieri T."/>
            <person name="Meyer R.R."/>
            <person name="Ozersky P."/>
            <person name="Armstrong J.R."/>
            <person name="Fulton R.S."/>
            <person name="Latreille J.P."/>
            <person name="Spieth J."/>
            <person name="Hooton T.M."/>
            <person name="Mardis E.R."/>
            <person name="Hultgren S.J."/>
            <person name="Gordon J.I."/>
        </authorList>
    </citation>
    <scope>NUCLEOTIDE SEQUENCE [LARGE SCALE GENOMIC DNA]</scope>
    <source>
        <strain>UTI89 / UPEC</strain>
    </source>
</reference>
<organism>
    <name type="scientific">Escherichia coli (strain UTI89 / UPEC)</name>
    <dbReference type="NCBI Taxonomy" id="364106"/>
    <lineage>
        <taxon>Bacteria</taxon>
        <taxon>Pseudomonadati</taxon>
        <taxon>Pseudomonadota</taxon>
        <taxon>Gammaproteobacteria</taxon>
        <taxon>Enterobacterales</taxon>
        <taxon>Enterobacteriaceae</taxon>
        <taxon>Escherichia</taxon>
    </lineage>
</organism>
<proteinExistence type="inferred from homology"/>